<gene>
    <name type="primary">psbV2</name>
    <name type="ordered locus">CYA_1686</name>
</gene>
<comment type="function">
    <text evidence="1">Possible low-potential cytochrome c.</text>
</comment>
<comment type="cofactor">
    <cofactor evidence="1">
        <name>heme c</name>
        <dbReference type="ChEBI" id="CHEBI:61717"/>
    </cofactor>
    <text evidence="1">Binds 1 heme c group covalently per subunit.</text>
</comment>
<comment type="subcellular location">
    <subcellularLocation>
        <location evidence="4">Cellular thylakoid membrane</location>
        <topology evidence="4">Peripheral membrane protein</topology>
        <orientation evidence="4">Lumenal side</orientation>
    </subcellularLocation>
</comment>
<comment type="similarity">
    <text evidence="4">Belongs to the cytochrome c family. PsbV subfamily.</text>
</comment>
<proteinExistence type="inferred from homology"/>
<keyword id="KW-0249">Electron transport</keyword>
<keyword id="KW-0349">Heme</keyword>
<keyword id="KW-0408">Iron</keyword>
<keyword id="KW-0472">Membrane</keyword>
<keyword id="KW-0479">Metal-binding</keyword>
<keyword id="KW-0602">Photosynthesis</keyword>
<keyword id="KW-0604">Photosystem II</keyword>
<keyword id="KW-0732">Signal</keyword>
<keyword id="KW-0793">Thylakoid</keyword>
<keyword id="KW-0813">Transport</keyword>
<organism>
    <name type="scientific">Synechococcus sp. (strain JA-3-3Ab)</name>
    <name type="common">Cyanobacteria bacterium Yellowstone A-Prime</name>
    <dbReference type="NCBI Taxonomy" id="321327"/>
    <lineage>
        <taxon>Bacteria</taxon>
        <taxon>Bacillati</taxon>
        <taxon>Cyanobacteriota</taxon>
        <taxon>Cyanophyceae</taxon>
        <taxon>Synechococcales</taxon>
        <taxon>Synechococcaceae</taxon>
        <taxon>Synechococcus</taxon>
    </lineage>
</organism>
<accession>Q2JTY7</accession>
<name>PSBV2_SYNJA</name>
<reference key="1">
    <citation type="journal article" date="2007" name="ISME J.">
        <title>Population level functional diversity in a microbial community revealed by comparative genomic and metagenomic analyses.</title>
        <authorList>
            <person name="Bhaya D."/>
            <person name="Grossman A.R."/>
            <person name="Steunou A.-S."/>
            <person name="Khuri N."/>
            <person name="Cohan F.M."/>
            <person name="Hamamura N."/>
            <person name="Melendrez M.C."/>
            <person name="Bateson M.M."/>
            <person name="Ward D.M."/>
            <person name="Heidelberg J.F."/>
        </authorList>
    </citation>
    <scope>NUCLEOTIDE SEQUENCE [LARGE SCALE GENOMIC DNA]</scope>
    <source>
        <strain>JA-3-3Ab</strain>
    </source>
</reference>
<feature type="signal peptide" evidence="2">
    <location>
        <begin position="1"/>
        <end position="37"/>
    </location>
</feature>
<feature type="chain" id="PRO_0000295607" description="Cytochrome c-550-like protein">
    <location>
        <begin position="38"/>
        <end position="174"/>
    </location>
</feature>
<feature type="binding site" description="covalent" evidence="3">
    <location>
        <position position="82"/>
    </location>
    <ligand>
        <name>heme c</name>
        <dbReference type="ChEBI" id="CHEBI:61717"/>
    </ligand>
</feature>
<feature type="binding site" description="covalent" evidence="3">
    <location>
        <position position="85"/>
    </location>
    <ligand>
        <name>heme c</name>
        <dbReference type="ChEBI" id="CHEBI:61717"/>
    </ligand>
</feature>
<feature type="binding site" description="axial binding residue" evidence="3">
    <location>
        <position position="86"/>
    </location>
    <ligand>
        <name>heme c</name>
        <dbReference type="ChEBI" id="CHEBI:61717"/>
    </ligand>
    <ligandPart>
        <name>Fe</name>
        <dbReference type="ChEBI" id="CHEBI:18248"/>
    </ligandPart>
</feature>
<feature type="binding site" evidence="1">
    <location>
        <position position="136"/>
    </location>
    <ligand>
        <name>heme c</name>
        <dbReference type="ChEBI" id="CHEBI:61717"/>
    </ligand>
    <ligandPart>
        <name>Fe</name>
        <dbReference type="ChEBI" id="CHEBI:18248"/>
    </ligandPart>
</feature>
<evidence type="ECO:0000250" key="1">
    <source>
        <dbReference type="UniProtKB" id="Q8DJE2"/>
    </source>
</evidence>
<evidence type="ECO:0000255" key="2"/>
<evidence type="ECO:0000255" key="3">
    <source>
        <dbReference type="PROSITE-ProRule" id="PRU00433"/>
    </source>
</evidence>
<evidence type="ECO:0000305" key="4"/>
<dbReference type="EMBL" id="CP000239">
    <property type="protein sequence ID" value="ABC99842.1"/>
    <property type="molecule type" value="Genomic_DNA"/>
</dbReference>
<dbReference type="RefSeq" id="WP_011430518.1">
    <property type="nucleotide sequence ID" value="NC_007775.1"/>
</dbReference>
<dbReference type="SMR" id="Q2JTY7"/>
<dbReference type="STRING" id="321327.CYA_1686"/>
<dbReference type="KEGG" id="cya:CYA_1686"/>
<dbReference type="eggNOG" id="COG2010">
    <property type="taxonomic scope" value="Bacteria"/>
</dbReference>
<dbReference type="HOGENOM" id="CLU_104149_0_0_3"/>
<dbReference type="OrthoDB" id="486949at2"/>
<dbReference type="Proteomes" id="UP000008818">
    <property type="component" value="Chromosome"/>
</dbReference>
<dbReference type="GO" id="GO:0009523">
    <property type="term" value="C:photosystem II"/>
    <property type="evidence" value="ECO:0007669"/>
    <property type="project" value="UniProtKB-KW"/>
</dbReference>
<dbReference type="GO" id="GO:0031676">
    <property type="term" value="C:plasma membrane-derived thylakoid membrane"/>
    <property type="evidence" value="ECO:0007669"/>
    <property type="project" value="UniProtKB-SubCell"/>
</dbReference>
<dbReference type="GO" id="GO:0009055">
    <property type="term" value="F:electron transfer activity"/>
    <property type="evidence" value="ECO:0007669"/>
    <property type="project" value="InterPro"/>
</dbReference>
<dbReference type="GO" id="GO:0020037">
    <property type="term" value="F:heme binding"/>
    <property type="evidence" value="ECO:0007669"/>
    <property type="project" value="InterPro"/>
</dbReference>
<dbReference type="GO" id="GO:0046872">
    <property type="term" value="F:metal ion binding"/>
    <property type="evidence" value="ECO:0007669"/>
    <property type="project" value="UniProtKB-KW"/>
</dbReference>
<dbReference type="GO" id="GO:0015979">
    <property type="term" value="P:photosynthesis"/>
    <property type="evidence" value="ECO:0007669"/>
    <property type="project" value="UniProtKB-KW"/>
</dbReference>
<dbReference type="Gene3D" id="1.10.760.10">
    <property type="entry name" value="Cytochrome c-like domain"/>
    <property type="match status" value="1"/>
</dbReference>
<dbReference type="InterPro" id="IPR009056">
    <property type="entry name" value="Cyt_c-like_dom"/>
</dbReference>
<dbReference type="InterPro" id="IPR036909">
    <property type="entry name" value="Cyt_c-like_dom_sf"/>
</dbReference>
<dbReference type="InterPro" id="IPR029490">
    <property type="entry name" value="Cytochrom_C550"/>
</dbReference>
<dbReference type="NCBIfam" id="TIGR03046">
    <property type="entry name" value="PS_II_psbV2"/>
    <property type="match status" value="1"/>
</dbReference>
<dbReference type="Pfam" id="PF14495">
    <property type="entry name" value="Cytochrom_C550"/>
    <property type="match status" value="1"/>
</dbReference>
<dbReference type="SUPFAM" id="SSF46626">
    <property type="entry name" value="Cytochrome c"/>
    <property type="match status" value="1"/>
</dbReference>
<dbReference type="PROSITE" id="PS51007">
    <property type="entry name" value="CYTC"/>
    <property type="match status" value="1"/>
</dbReference>
<protein>
    <recommendedName>
        <fullName>Cytochrome c-550-like protein</fullName>
    </recommendedName>
</protein>
<sequence length="174" mass="19022">MPGQTQGAKRWRVPGRGWRWAGILLLVWLGLASPAAGRIDPYVSHYLRTTEPIELPWDAEGHMLTFTPEQLTDGKNRFQSACLNCHVGGSTLPAPNISLSLKDLRGATPPRDTIQALVEYQRDPRSYDGTEVSYGCRPVPPSWMDDEALRNLAAFILRAAQVAPGWGSNAIGGG</sequence>